<accession>Q669A0</accession>
<proteinExistence type="inferred from homology"/>
<dbReference type="EC" id="7.1.1.-" evidence="1"/>
<dbReference type="EMBL" id="BX936398">
    <property type="protein sequence ID" value="CAH21825.1"/>
    <property type="molecule type" value="Genomic_DNA"/>
</dbReference>
<dbReference type="RefSeq" id="WP_002210279.1">
    <property type="nucleotide sequence ID" value="NZ_CP009712.1"/>
</dbReference>
<dbReference type="SMR" id="Q669A0"/>
<dbReference type="KEGG" id="yps:YPTB2587"/>
<dbReference type="Proteomes" id="UP000001011">
    <property type="component" value="Chromosome"/>
</dbReference>
<dbReference type="GO" id="GO:0030964">
    <property type="term" value="C:NADH dehydrogenase complex"/>
    <property type="evidence" value="ECO:0007669"/>
    <property type="project" value="TreeGrafter"/>
</dbReference>
<dbReference type="GO" id="GO:0005886">
    <property type="term" value="C:plasma membrane"/>
    <property type="evidence" value="ECO:0007669"/>
    <property type="project" value="UniProtKB-SubCell"/>
</dbReference>
<dbReference type="GO" id="GO:0008137">
    <property type="term" value="F:NADH dehydrogenase (ubiquinone) activity"/>
    <property type="evidence" value="ECO:0007669"/>
    <property type="project" value="InterPro"/>
</dbReference>
<dbReference type="GO" id="GO:0050136">
    <property type="term" value="F:NADH:ubiquinone reductase (non-electrogenic) activity"/>
    <property type="evidence" value="ECO:0007669"/>
    <property type="project" value="UniProtKB-UniRule"/>
</dbReference>
<dbReference type="GO" id="GO:0048038">
    <property type="term" value="F:quinone binding"/>
    <property type="evidence" value="ECO:0007669"/>
    <property type="project" value="UniProtKB-KW"/>
</dbReference>
<dbReference type="FunFam" id="1.20.58.1610:FF:000003">
    <property type="entry name" value="NADH-quinone oxidoreductase subunit A"/>
    <property type="match status" value="1"/>
</dbReference>
<dbReference type="Gene3D" id="1.20.58.1610">
    <property type="entry name" value="NADH:ubiquinone/plastoquinone oxidoreductase, chain 3"/>
    <property type="match status" value="1"/>
</dbReference>
<dbReference type="HAMAP" id="MF_01394">
    <property type="entry name" value="NDH1_NuoA"/>
    <property type="match status" value="1"/>
</dbReference>
<dbReference type="InterPro" id="IPR023043">
    <property type="entry name" value="NAD(P)H_OxRDtase_bac/plastid"/>
</dbReference>
<dbReference type="InterPro" id="IPR000440">
    <property type="entry name" value="NADH_UbQ/plastoQ_OxRdtase_su3"/>
</dbReference>
<dbReference type="InterPro" id="IPR038430">
    <property type="entry name" value="NDAH_ubi_oxred_su3_sf"/>
</dbReference>
<dbReference type="PANTHER" id="PTHR11058:SF21">
    <property type="entry name" value="NADH-QUINONE OXIDOREDUCTASE SUBUNIT A"/>
    <property type="match status" value="1"/>
</dbReference>
<dbReference type="PANTHER" id="PTHR11058">
    <property type="entry name" value="NADH-UBIQUINONE OXIDOREDUCTASE CHAIN 3"/>
    <property type="match status" value="1"/>
</dbReference>
<dbReference type="Pfam" id="PF00507">
    <property type="entry name" value="Oxidored_q4"/>
    <property type="match status" value="1"/>
</dbReference>
<reference key="1">
    <citation type="journal article" date="2004" name="Proc. Natl. Acad. Sci. U.S.A.">
        <title>Insights into the evolution of Yersinia pestis through whole-genome comparison with Yersinia pseudotuberculosis.</title>
        <authorList>
            <person name="Chain P.S.G."/>
            <person name="Carniel E."/>
            <person name="Larimer F.W."/>
            <person name="Lamerdin J."/>
            <person name="Stoutland P.O."/>
            <person name="Regala W.M."/>
            <person name="Georgescu A.M."/>
            <person name="Vergez L.M."/>
            <person name="Land M.L."/>
            <person name="Motin V.L."/>
            <person name="Brubaker R.R."/>
            <person name="Fowler J."/>
            <person name="Hinnebusch J."/>
            <person name="Marceau M."/>
            <person name="Medigue C."/>
            <person name="Simonet M."/>
            <person name="Chenal-Francisque V."/>
            <person name="Souza B."/>
            <person name="Dacheux D."/>
            <person name="Elliott J.M."/>
            <person name="Derbise A."/>
            <person name="Hauser L.J."/>
            <person name="Garcia E."/>
        </authorList>
    </citation>
    <scope>NUCLEOTIDE SEQUENCE [LARGE SCALE GENOMIC DNA]</scope>
    <source>
        <strain>IP32953</strain>
    </source>
</reference>
<protein>
    <recommendedName>
        <fullName evidence="1">NADH-quinone oxidoreductase subunit A</fullName>
        <ecNumber evidence="1">7.1.1.-</ecNumber>
    </recommendedName>
    <alternativeName>
        <fullName evidence="1">NADH dehydrogenase I subunit A</fullName>
    </alternativeName>
    <alternativeName>
        <fullName evidence="1">NDH-1 subunit A</fullName>
    </alternativeName>
    <alternativeName>
        <fullName evidence="1">NUO1</fullName>
    </alternativeName>
</protein>
<gene>
    <name evidence="1" type="primary">nuoA</name>
    <name type="ordered locus">YPTB2587</name>
</gene>
<comment type="function">
    <text evidence="1">NDH-1 shuttles electrons from NADH, via FMN and iron-sulfur (Fe-S) centers, to quinones in the respiratory chain. The immediate electron acceptor for the enzyme in this species is believed to be ubiquinone. Couples the redox reaction to proton translocation (for every two electrons transferred, four hydrogen ions are translocated across the cytoplasmic membrane), and thus conserves the redox energy in a proton gradient.</text>
</comment>
<comment type="catalytic activity">
    <reaction evidence="1">
        <text>a quinone + NADH + 5 H(+)(in) = a quinol + NAD(+) + 4 H(+)(out)</text>
        <dbReference type="Rhea" id="RHEA:57888"/>
        <dbReference type="ChEBI" id="CHEBI:15378"/>
        <dbReference type="ChEBI" id="CHEBI:24646"/>
        <dbReference type="ChEBI" id="CHEBI:57540"/>
        <dbReference type="ChEBI" id="CHEBI:57945"/>
        <dbReference type="ChEBI" id="CHEBI:132124"/>
    </reaction>
</comment>
<comment type="subunit">
    <text evidence="1">NDH-1 is composed of 13 different subunits. Subunits NuoA, H, J, K, L, M, N constitute the membrane sector of the complex.</text>
</comment>
<comment type="subcellular location">
    <subcellularLocation>
        <location evidence="1">Cell inner membrane</location>
        <topology evidence="1">Multi-pass membrane protein</topology>
    </subcellularLocation>
</comment>
<comment type="similarity">
    <text evidence="1">Belongs to the complex I subunit 3 family.</text>
</comment>
<feature type="chain" id="PRO_5000098854" description="NADH-quinone oxidoreductase subunit A">
    <location>
        <begin position="1"/>
        <end position="166"/>
    </location>
</feature>
<feature type="transmembrane region" description="Helical" evidence="1">
    <location>
        <begin position="16"/>
        <end position="36"/>
    </location>
</feature>
<feature type="transmembrane region" description="Helical" evidence="1">
    <location>
        <begin position="68"/>
        <end position="88"/>
    </location>
</feature>
<feature type="transmembrane region" description="Helical" evidence="1">
    <location>
        <begin position="98"/>
        <end position="118"/>
    </location>
</feature>
<feature type="region of interest" description="Disordered" evidence="2">
    <location>
        <begin position="141"/>
        <end position="166"/>
    </location>
</feature>
<evidence type="ECO:0000255" key="1">
    <source>
        <dbReference type="HAMAP-Rule" id="MF_01394"/>
    </source>
</evidence>
<evidence type="ECO:0000256" key="2">
    <source>
        <dbReference type="SAM" id="MobiDB-lite"/>
    </source>
</evidence>
<organism>
    <name type="scientific">Yersinia pseudotuberculosis serotype I (strain IP32953)</name>
    <dbReference type="NCBI Taxonomy" id="273123"/>
    <lineage>
        <taxon>Bacteria</taxon>
        <taxon>Pseudomonadati</taxon>
        <taxon>Pseudomonadota</taxon>
        <taxon>Gammaproteobacteria</taxon>
        <taxon>Enterobacterales</taxon>
        <taxon>Yersiniaceae</taxon>
        <taxon>Yersinia</taxon>
    </lineage>
</organism>
<keyword id="KW-0997">Cell inner membrane</keyword>
<keyword id="KW-1003">Cell membrane</keyword>
<keyword id="KW-0472">Membrane</keyword>
<keyword id="KW-0520">NAD</keyword>
<keyword id="KW-0874">Quinone</keyword>
<keyword id="KW-1278">Translocase</keyword>
<keyword id="KW-0812">Transmembrane</keyword>
<keyword id="KW-1133">Transmembrane helix</keyword>
<keyword id="KW-0813">Transport</keyword>
<keyword id="KW-0830">Ubiquinone</keyword>
<name>NUOA_YERPS</name>
<sequence length="166" mass="18376">MRMSTTTEIIAHHWAFAVFLIGAVGLCGLMLLGAYFLGGRAQARAKNVPYESGIDSVGSARMRLSAKFYLVAMFFVIFDVEALYLYAWSISIRESGWIGFIEAAIFILVLLAGLFYLVRIGALDWTPTRSNRRVSKPSTVRYASSHPQDISQELSVAGSQQANESR</sequence>